<organism>
    <name type="scientific">Rhodopseudomonas palustris (strain ATCC BAA-98 / CGA009)</name>
    <dbReference type="NCBI Taxonomy" id="258594"/>
    <lineage>
        <taxon>Bacteria</taxon>
        <taxon>Pseudomonadati</taxon>
        <taxon>Pseudomonadota</taxon>
        <taxon>Alphaproteobacteria</taxon>
        <taxon>Hyphomicrobiales</taxon>
        <taxon>Nitrobacteraceae</taxon>
        <taxon>Rhodopseudomonas</taxon>
    </lineage>
</organism>
<feature type="chain" id="PRO_0000170078" description="LexA repressor">
    <location>
        <begin position="1"/>
        <end position="236"/>
    </location>
</feature>
<feature type="DNA-binding region" description="H-T-H motif" evidence="1">
    <location>
        <begin position="26"/>
        <end position="46"/>
    </location>
</feature>
<feature type="region of interest" description="Disordered" evidence="2">
    <location>
        <begin position="85"/>
        <end position="109"/>
    </location>
</feature>
<feature type="active site" description="For autocatalytic cleavage activity" evidence="1">
    <location>
        <position position="157"/>
    </location>
</feature>
<feature type="active site" description="For autocatalytic cleavage activity" evidence="1">
    <location>
        <position position="195"/>
    </location>
</feature>
<feature type="site" description="Cleavage; by autolysis" evidence="1">
    <location>
        <begin position="122"/>
        <end position="123"/>
    </location>
</feature>
<accession>P61614</accession>
<reference key="1">
    <citation type="journal article" date="2004" name="Nat. Biotechnol.">
        <title>Complete genome sequence of the metabolically versatile photosynthetic bacterium Rhodopseudomonas palustris.</title>
        <authorList>
            <person name="Larimer F.W."/>
            <person name="Chain P."/>
            <person name="Hauser L."/>
            <person name="Lamerdin J.E."/>
            <person name="Malfatti S."/>
            <person name="Do L."/>
            <person name="Land M.L."/>
            <person name="Pelletier D.A."/>
            <person name="Beatty J.T."/>
            <person name="Lang A.S."/>
            <person name="Tabita F.R."/>
            <person name="Gibson J.L."/>
            <person name="Hanson T.E."/>
            <person name="Bobst C."/>
            <person name="Torres y Torres J.L."/>
            <person name="Peres C."/>
            <person name="Harrison F.H."/>
            <person name="Gibson J."/>
            <person name="Harwood C.S."/>
        </authorList>
    </citation>
    <scope>NUCLEOTIDE SEQUENCE [LARGE SCALE GENOMIC DNA]</scope>
    <source>
        <strain>ATCC BAA-98 / CGA009</strain>
    </source>
</reference>
<dbReference type="EC" id="3.4.21.88" evidence="1"/>
<dbReference type="EMBL" id="BX572602">
    <property type="protein sequence ID" value="CAE28344.1"/>
    <property type="status" value="ALT_INIT"/>
    <property type="molecule type" value="Genomic_DNA"/>
</dbReference>
<dbReference type="RefSeq" id="WP_012496347.1">
    <property type="nucleotide sequence ID" value="NZ_CP116810.1"/>
</dbReference>
<dbReference type="SMR" id="P61614"/>
<dbReference type="STRING" id="258594.RPA2903"/>
<dbReference type="MEROPS" id="S24.001"/>
<dbReference type="GeneID" id="66893985"/>
<dbReference type="eggNOG" id="COG1974">
    <property type="taxonomic scope" value="Bacteria"/>
</dbReference>
<dbReference type="HOGENOM" id="CLU_066192_45_2_5"/>
<dbReference type="PhylomeDB" id="P61614"/>
<dbReference type="GO" id="GO:0003677">
    <property type="term" value="F:DNA binding"/>
    <property type="evidence" value="ECO:0007669"/>
    <property type="project" value="UniProtKB-UniRule"/>
</dbReference>
<dbReference type="GO" id="GO:0004252">
    <property type="term" value="F:serine-type endopeptidase activity"/>
    <property type="evidence" value="ECO:0007669"/>
    <property type="project" value="UniProtKB-UniRule"/>
</dbReference>
<dbReference type="GO" id="GO:0006281">
    <property type="term" value="P:DNA repair"/>
    <property type="evidence" value="ECO:0007669"/>
    <property type="project" value="UniProtKB-UniRule"/>
</dbReference>
<dbReference type="GO" id="GO:0006260">
    <property type="term" value="P:DNA replication"/>
    <property type="evidence" value="ECO:0007669"/>
    <property type="project" value="UniProtKB-UniRule"/>
</dbReference>
<dbReference type="GO" id="GO:0045892">
    <property type="term" value="P:negative regulation of DNA-templated transcription"/>
    <property type="evidence" value="ECO:0007669"/>
    <property type="project" value="UniProtKB-UniRule"/>
</dbReference>
<dbReference type="GO" id="GO:0006508">
    <property type="term" value="P:proteolysis"/>
    <property type="evidence" value="ECO:0007669"/>
    <property type="project" value="InterPro"/>
</dbReference>
<dbReference type="GO" id="GO:0009432">
    <property type="term" value="P:SOS response"/>
    <property type="evidence" value="ECO:0007669"/>
    <property type="project" value="UniProtKB-UniRule"/>
</dbReference>
<dbReference type="CDD" id="cd06529">
    <property type="entry name" value="S24_LexA-like"/>
    <property type="match status" value="1"/>
</dbReference>
<dbReference type="FunFam" id="1.10.10.10:FF:000102">
    <property type="entry name" value="LexA repressor"/>
    <property type="match status" value="1"/>
</dbReference>
<dbReference type="FunFam" id="2.10.109.10:FF:000001">
    <property type="entry name" value="LexA repressor"/>
    <property type="match status" value="1"/>
</dbReference>
<dbReference type="Gene3D" id="2.10.109.10">
    <property type="entry name" value="Umud Fragment, subunit A"/>
    <property type="match status" value="1"/>
</dbReference>
<dbReference type="Gene3D" id="1.10.10.10">
    <property type="entry name" value="Winged helix-like DNA-binding domain superfamily/Winged helix DNA-binding domain"/>
    <property type="match status" value="1"/>
</dbReference>
<dbReference type="HAMAP" id="MF_00015">
    <property type="entry name" value="LexA"/>
    <property type="match status" value="1"/>
</dbReference>
<dbReference type="InterPro" id="IPR006200">
    <property type="entry name" value="LexA"/>
</dbReference>
<dbReference type="InterPro" id="IPR039418">
    <property type="entry name" value="LexA-like"/>
</dbReference>
<dbReference type="InterPro" id="IPR036286">
    <property type="entry name" value="LexA/Signal_pep-like_sf"/>
</dbReference>
<dbReference type="InterPro" id="IPR006199">
    <property type="entry name" value="LexA_DNA-bd_dom"/>
</dbReference>
<dbReference type="InterPro" id="IPR050077">
    <property type="entry name" value="LexA_repressor"/>
</dbReference>
<dbReference type="InterPro" id="IPR006197">
    <property type="entry name" value="Peptidase_S24_LexA"/>
</dbReference>
<dbReference type="InterPro" id="IPR015927">
    <property type="entry name" value="Peptidase_S24_S26A/B/C"/>
</dbReference>
<dbReference type="InterPro" id="IPR036388">
    <property type="entry name" value="WH-like_DNA-bd_sf"/>
</dbReference>
<dbReference type="InterPro" id="IPR036390">
    <property type="entry name" value="WH_DNA-bd_sf"/>
</dbReference>
<dbReference type="NCBIfam" id="TIGR00498">
    <property type="entry name" value="lexA"/>
    <property type="match status" value="1"/>
</dbReference>
<dbReference type="PANTHER" id="PTHR33516">
    <property type="entry name" value="LEXA REPRESSOR"/>
    <property type="match status" value="1"/>
</dbReference>
<dbReference type="PANTHER" id="PTHR33516:SF2">
    <property type="entry name" value="LEXA REPRESSOR-RELATED"/>
    <property type="match status" value="1"/>
</dbReference>
<dbReference type="Pfam" id="PF01726">
    <property type="entry name" value="LexA_DNA_bind"/>
    <property type="match status" value="1"/>
</dbReference>
<dbReference type="Pfam" id="PF00717">
    <property type="entry name" value="Peptidase_S24"/>
    <property type="match status" value="1"/>
</dbReference>
<dbReference type="PRINTS" id="PR00726">
    <property type="entry name" value="LEXASERPTASE"/>
</dbReference>
<dbReference type="SUPFAM" id="SSF51306">
    <property type="entry name" value="LexA/Signal peptidase"/>
    <property type="match status" value="1"/>
</dbReference>
<dbReference type="SUPFAM" id="SSF46785">
    <property type="entry name" value="Winged helix' DNA-binding domain"/>
    <property type="match status" value="1"/>
</dbReference>
<evidence type="ECO:0000255" key="1">
    <source>
        <dbReference type="HAMAP-Rule" id="MF_00015"/>
    </source>
</evidence>
<evidence type="ECO:0000256" key="2">
    <source>
        <dbReference type="SAM" id="MobiDB-lite"/>
    </source>
</evidence>
<evidence type="ECO:0000305" key="3"/>
<name>LEXA_RHOPA</name>
<keyword id="KW-0068">Autocatalytic cleavage</keyword>
<keyword id="KW-0227">DNA damage</keyword>
<keyword id="KW-0234">DNA repair</keyword>
<keyword id="KW-0235">DNA replication</keyword>
<keyword id="KW-0238">DNA-binding</keyword>
<keyword id="KW-0378">Hydrolase</keyword>
<keyword id="KW-0678">Repressor</keyword>
<keyword id="KW-0742">SOS response</keyword>
<keyword id="KW-0804">Transcription</keyword>
<keyword id="KW-0805">Transcription regulation</keyword>
<gene>
    <name evidence="1" type="primary">lexA</name>
    <name type="ordered locus">RPA2903</name>
</gene>
<proteinExistence type="inferred from homology"/>
<protein>
    <recommendedName>
        <fullName evidence="1">LexA repressor</fullName>
        <ecNumber evidence="1">3.4.21.88</ecNumber>
    </recommendedName>
</protein>
<comment type="function">
    <text evidence="1">Represses a number of genes involved in the response to DNA damage (SOS response), including recA and lexA. In the presence of single-stranded DNA, RecA interacts with LexA causing an autocatalytic cleavage which disrupts the DNA-binding part of LexA, leading to derepression of the SOS regulon and eventually DNA repair.</text>
</comment>
<comment type="catalytic activity">
    <reaction evidence="1">
        <text>Hydrolysis of Ala-|-Gly bond in repressor LexA.</text>
        <dbReference type="EC" id="3.4.21.88"/>
    </reaction>
</comment>
<comment type="subunit">
    <text evidence="1">Homodimer.</text>
</comment>
<comment type="similarity">
    <text evidence="1">Belongs to the peptidase S24 family.</text>
</comment>
<comment type="sequence caution" evidence="3">
    <conflict type="erroneous initiation">
        <sequence resource="EMBL-CDS" id="CAE28344"/>
    </conflict>
</comment>
<sequence length="236" mass="25912">MLTRKQFELLKFINERLKEAGVPPSFDEMKDALDLRSKSGIHRLITALEERGFIRRLPNRARAIEVIKLPDTGGMPGNSRRGFTPSVIEGNLGKVRPPSPTPAEDDHDRGSVAVPVMGRIAAGTPIEALQSRSHTISVPADMLGSGEHYALEVRGDSMVEAGILDGDMALIQKNDVADTGDIVVALIDEEEATLKRFRRRGASIALEPANAAYEVRILPPNRVRIQGKLIGLYRKY</sequence>